<keyword id="KW-0002">3D-structure</keyword>
<keyword id="KW-0067">ATP-binding</keyword>
<keyword id="KW-0119">Carbohydrate metabolism</keyword>
<keyword id="KW-0418">Kinase</keyword>
<keyword id="KW-0547">Nucleotide-binding</keyword>
<keyword id="KW-1185">Reference proteome</keyword>
<keyword id="KW-0808">Transferase</keyword>
<proteinExistence type="evidence at protein level"/>
<comment type="function">
    <text evidence="2">Catalyzes the ATP-dependent phosphorylation of cellobiose to produce cellobiose-6'-P. May have a dual role of kinase and transcriptional regulator of the cellobiose-PTS operon.</text>
</comment>
<comment type="catalytic activity">
    <reaction evidence="2">
        <text>D-cellobiose + ATP = 6-phospho-beta-D-glucosyl-(1-&gt;4)-D-glucose + ADP + H(+)</text>
        <dbReference type="Rhea" id="RHEA:21944"/>
        <dbReference type="ChEBI" id="CHEBI:15378"/>
        <dbReference type="ChEBI" id="CHEBI:17057"/>
        <dbReference type="ChEBI" id="CHEBI:30616"/>
        <dbReference type="ChEBI" id="CHEBI:58312"/>
        <dbReference type="ChEBI" id="CHEBI:456216"/>
        <dbReference type="EC" id="2.7.1.85"/>
    </reaction>
</comment>
<comment type="similarity">
    <text evidence="3">Belongs to the ROK (NagC/XylR) family.</text>
</comment>
<sequence>MKIAAFDIGGTALKMGVVLPHGEIILTKSAEISGSDGDQILAEMKVFLAENTDVTGIAVSAPGYVNPKTGLITMGGAIRRFDNFNLKEWLEAETGLPVAIENDANCALLAEKWLGKGQDLDDFLCLTIGTGIGGGIFSNGELVRGGRFRAGEFGYMFSERPGAFRPGKYTLNETTTMLVLRRQYAELTGRPLEEITGEEIFANYDAHDAVSERLITEFYTGICTGLYNLIYLFDPTHIFIGGGITSRPTFIAELKHHMESFGLRDTIIETATHKNQAGLLGAVYHFLQEENRHE</sequence>
<name>BGLK_LISMO</name>
<protein>
    <recommendedName>
        <fullName>Beta-glucoside kinase</fullName>
        <ecNumber>2.7.1.85</ecNumber>
    </recommendedName>
</protein>
<organism>
    <name type="scientific">Listeria monocytogenes serovar 1/2a (strain ATCC BAA-679 / EGD-e)</name>
    <dbReference type="NCBI Taxonomy" id="169963"/>
    <lineage>
        <taxon>Bacteria</taxon>
        <taxon>Bacillati</taxon>
        <taxon>Bacillota</taxon>
        <taxon>Bacilli</taxon>
        <taxon>Bacillales</taxon>
        <taxon>Listeriaceae</taxon>
        <taxon>Listeria</taxon>
    </lineage>
</organism>
<evidence type="ECO:0000250" key="1"/>
<evidence type="ECO:0000269" key="2">
    <source>
    </source>
</evidence>
<evidence type="ECO:0000305" key="3"/>
<evidence type="ECO:0007829" key="4">
    <source>
        <dbReference type="PDB" id="4HTL"/>
    </source>
</evidence>
<reference key="1">
    <citation type="journal article" date="2001" name="Science">
        <title>Comparative genomics of Listeria species.</title>
        <authorList>
            <person name="Glaser P."/>
            <person name="Frangeul L."/>
            <person name="Buchrieser C."/>
            <person name="Rusniok C."/>
            <person name="Amend A."/>
            <person name="Baquero F."/>
            <person name="Berche P."/>
            <person name="Bloecker H."/>
            <person name="Brandt P."/>
            <person name="Chakraborty T."/>
            <person name="Charbit A."/>
            <person name="Chetouani F."/>
            <person name="Couve E."/>
            <person name="de Daruvar A."/>
            <person name="Dehoux P."/>
            <person name="Domann E."/>
            <person name="Dominguez-Bernal G."/>
            <person name="Duchaud E."/>
            <person name="Durant L."/>
            <person name="Dussurget O."/>
            <person name="Entian K.-D."/>
            <person name="Fsihi H."/>
            <person name="Garcia-del Portillo F."/>
            <person name="Garrido P."/>
            <person name="Gautier L."/>
            <person name="Goebel W."/>
            <person name="Gomez-Lopez N."/>
            <person name="Hain T."/>
            <person name="Hauf J."/>
            <person name="Jackson D."/>
            <person name="Jones L.-M."/>
            <person name="Kaerst U."/>
            <person name="Kreft J."/>
            <person name="Kuhn M."/>
            <person name="Kunst F."/>
            <person name="Kurapkat G."/>
            <person name="Madueno E."/>
            <person name="Maitournam A."/>
            <person name="Mata Vicente J."/>
            <person name="Ng E."/>
            <person name="Nedjari H."/>
            <person name="Nordsiek G."/>
            <person name="Novella S."/>
            <person name="de Pablos B."/>
            <person name="Perez-Diaz J.-C."/>
            <person name="Purcell R."/>
            <person name="Remmel B."/>
            <person name="Rose M."/>
            <person name="Schlueter T."/>
            <person name="Simoes N."/>
            <person name="Tierrez A."/>
            <person name="Vazquez-Boland J.-A."/>
            <person name="Voss H."/>
            <person name="Wehland J."/>
            <person name="Cossart P."/>
        </authorList>
    </citation>
    <scope>NUCLEOTIDE SEQUENCE [LARGE SCALE GENOMIC DNA]</scope>
    <source>
        <strain>ATCC BAA-679 / EGD-e</strain>
    </source>
</reference>
<reference key="2">
    <citation type="journal article" date="2002" name="J. Biol. Chem.">
        <title>Beta-glucoside kinase (BglK) from Klebsiella pneumoniae. Purification, properties, and preparative synthesis of 6-phospho-beta-D-glucosides.</title>
        <authorList>
            <person name="Thompson J."/>
            <person name="Lichtenthaler F.W."/>
            <person name="Peters S."/>
            <person name="Pikis A."/>
        </authorList>
    </citation>
    <scope>CATALYTIC ACTIVITY</scope>
    <scope>FUNCTION</scope>
    <source>
        <strain>ATCC BAA-679 / EGD-e</strain>
    </source>
</reference>
<feature type="chain" id="PRO_0000390476" description="Beta-glucoside kinase">
    <location>
        <begin position="1"/>
        <end position="294"/>
    </location>
</feature>
<feature type="binding site" evidence="1">
    <location>
        <begin position="5"/>
        <end position="11"/>
    </location>
    <ligand>
        <name>ATP</name>
        <dbReference type="ChEBI" id="CHEBI:30616"/>
    </ligand>
</feature>
<feature type="strand" evidence="4">
    <location>
        <begin position="3"/>
        <end position="8"/>
    </location>
</feature>
<feature type="strand" evidence="4">
    <location>
        <begin position="10"/>
        <end position="18"/>
    </location>
</feature>
<feature type="strand" evidence="4">
    <location>
        <begin position="24"/>
        <end position="31"/>
    </location>
</feature>
<feature type="helix" evidence="4">
    <location>
        <begin position="37"/>
        <end position="49"/>
    </location>
</feature>
<feature type="strand" evidence="4">
    <location>
        <begin position="56"/>
        <end position="65"/>
    </location>
</feature>
<feature type="turn" evidence="4">
    <location>
        <begin position="67"/>
        <end position="69"/>
    </location>
</feature>
<feature type="strand" evidence="4">
    <location>
        <begin position="71"/>
        <end position="74"/>
    </location>
</feature>
<feature type="helix" evidence="4">
    <location>
        <begin position="79"/>
        <end position="81"/>
    </location>
</feature>
<feature type="helix" evidence="4">
    <location>
        <begin position="86"/>
        <end position="94"/>
    </location>
</feature>
<feature type="strand" evidence="4">
    <location>
        <begin position="98"/>
        <end position="102"/>
    </location>
</feature>
<feature type="helix" evidence="4">
    <location>
        <begin position="103"/>
        <end position="114"/>
    </location>
</feature>
<feature type="turn" evidence="4">
    <location>
        <begin position="116"/>
        <end position="119"/>
    </location>
</feature>
<feature type="strand" evidence="4">
    <location>
        <begin position="121"/>
        <end position="138"/>
    </location>
</feature>
<feature type="helix" evidence="4">
    <location>
        <begin position="153"/>
        <end position="155"/>
    </location>
</feature>
<feature type="strand" evidence="4">
    <location>
        <begin position="156"/>
        <end position="159"/>
    </location>
</feature>
<feature type="helix" evidence="4">
    <location>
        <begin position="166"/>
        <end position="169"/>
    </location>
</feature>
<feature type="helix" evidence="4">
    <location>
        <begin position="171"/>
        <end position="174"/>
    </location>
</feature>
<feature type="helix" evidence="4">
    <location>
        <begin position="177"/>
        <end position="188"/>
    </location>
</feature>
<feature type="helix" evidence="4">
    <location>
        <begin position="192"/>
        <end position="194"/>
    </location>
</feature>
<feature type="helix" evidence="4">
    <location>
        <begin position="197"/>
        <end position="205"/>
    </location>
</feature>
<feature type="helix" evidence="4">
    <location>
        <begin position="209"/>
        <end position="233"/>
    </location>
</feature>
<feature type="strand" evidence="4">
    <location>
        <begin position="236"/>
        <end position="242"/>
    </location>
</feature>
<feature type="helix" evidence="4">
    <location>
        <begin position="243"/>
        <end position="246"/>
    </location>
</feature>
<feature type="helix" evidence="4">
    <location>
        <begin position="250"/>
        <end position="258"/>
    </location>
</feature>
<feature type="turn" evidence="4">
    <location>
        <begin position="259"/>
        <end position="261"/>
    </location>
</feature>
<feature type="strand" evidence="4">
    <location>
        <begin position="267"/>
        <end position="270"/>
    </location>
</feature>
<feature type="turn" evidence="4">
    <location>
        <begin position="274"/>
        <end position="276"/>
    </location>
</feature>
<feature type="helix" evidence="4">
    <location>
        <begin position="277"/>
        <end position="290"/>
    </location>
</feature>
<gene>
    <name type="primary">bglK</name>
    <name type="ordered locus">lmo2764</name>
</gene>
<dbReference type="EC" id="2.7.1.85"/>
<dbReference type="EMBL" id="AL591984">
    <property type="protein sequence ID" value="CAD00977.1"/>
    <property type="molecule type" value="Genomic_DNA"/>
</dbReference>
<dbReference type="PIR" id="AC1420">
    <property type="entry name" value="AC1420"/>
</dbReference>
<dbReference type="RefSeq" id="NP_466286.1">
    <property type="nucleotide sequence ID" value="NC_003210.1"/>
</dbReference>
<dbReference type="RefSeq" id="WP_009931557.1">
    <property type="nucleotide sequence ID" value="NZ_CP149495.1"/>
</dbReference>
<dbReference type="PDB" id="4HTL">
    <property type="method" value="X-ray"/>
    <property type="resolution" value="1.64 A"/>
    <property type="chains" value="A=1-294"/>
</dbReference>
<dbReference type="PDBsum" id="4HTL"/>
<dbReference type="SMR" id="Q8Y3R9"/>
<dbReference type="STRING" id="169963.gene:17595481"/>
<dbReference type="PaxDb" id="169963-lmo2764"/>
<dbReference type="DNASU" id="986173"/>
<dbReference type="EnsemblBacteria" id="CAD00977">
    <property type="protein sequence ID" value="CAD00977"/>
    <property type="gene ID" value="CAD00977"/>
</dbReference>
<dbReference type="GeneID" id="986173"/>
<dbReference type="KEGG" id="lmo:lmo2764"/>
<dbReference type="PATRIC" id="fig|169963.11.peg.2833"/>
<dbReference type="eggNOG" id="COG1940">
    <property type="taxonomic scope" value="Bacteria"/>
</dbReference>
<dbReference type="HOGENOM" id="CLU_036604_0_2_9"/>
<dbReference type="OrthoDB" id="9795247at2"/>
<dbReference type="PhylomeDB" id="Q8Y3R9"/>
<dbReference type="BioCyc" id="LMON169963:LMO2764-MONOMER"/>
<dbReference type="EvolutionaryTrace" id="Q8Y3R9"/>
<dbReference type="Proteomes" id="UP000000817">
    <property type="component" value="Chromosome"/>
</dbReference>
<dbReference type="GO" id="GO:0005524">
    <property type="term" value="F:ATP binding"/>
    <property type="evidence" value="ECO:0007669"/>
    <property type="project" value="UniProtKB-KW"/>
</dbReference>
<dbReference type="GO" id="GO:0047700">
    <property type="term" value="F:beta-glucoside kinase activity"/>
    <property type="evidence" value="ECO:0007669"/>
    <property type="project" value="UniProtKB-EC"/>
</dbReference>
<dbReference type="CDD" id="cd24068">
    <property type="entry name" value="ASKHA_NBD_ROK_FnNanK-like"/>
    <property type="match status" value="1"/>
</dbReference>
<dbReference type="Gene3D" id="3.30.420.40">
    <property type="match status" value="2"/>
</dbReference>
<dbReference type="InterPro" id="IPR043129">
    <property type="entry name" value="ATPase_NBD"/>
</dbReference>
<dbReference type="InterPro" id="IPR000600">
    <property type="entry name" value="ROK"/>
</dbReference>
<dbReference type="PANTHER" id="PTHR18964:SF165">
    <property type="entry name" value="BETA-GLUCOSIDE KINASE"/>
    <property type="match status" value="1"/>
</dbReference>
<dbReference type="PANTHER" id="PTHR18964">
    <property type="entry name" value="ROK (REPRESSOR, ORF, KINASE) FAMILY"/>
    <property type="match status" value="1"/>
</dbReference>
<dbReference type="Pfam" id="PF00480">
    <property type="entry name" value="ROK"/>
    <property type="match status" value="1"/>
</dbReference>
<dbReference type="SUPFAM" id="SSF53067">
    <property type="entry name" value="Actin-like ATPase domain"/>
    <property type="match status" value="1"/>
</dbReference>
<accession>Q8Y3R9</accession>